<evidence type="ECO:0000255" key="1">
    <source>
        <dbReference type="HAMAP-Rule" id="MF_01251"/>
    </source>
</evidence>
<evidence type="ECO:0000255" key="2">
    <source>
        <dbReference type="PROSITE-ProRule" id="PRU01266"/>
    </source>
</evidence>
<evidence type="ECO:0000256" key="3">
    <source>
        <dbReference type="SAM" id="MobiDB-lite"/>
    </source>
</evidence>
<keyword id="KW-0004">4Fe-4S</keyword>
<keyword id="KW-0408">Iron</keyword>
<keyword id="KW-0411">Iron-sulfur</keyword>
<keyword id="KW-0479">Metal-binding</keyword>
<keyword id="KW-1185">Reference proteome</keyword>
<keyword id="KW-0949">S-adenosyl-L-methionine</keyword>
<proteinExistence type="inferred from homology"/>
<accession>Q8ZM03</accession>
<reference key="1">
    <citation type="journal article" date="2001" name="Nature">
        <title>Complete genome sequence of Salmonella enterica serovar Typhimurium LT2.</title>
        <authorList>
            <person name="McClelland M."/>
            <person name="Sanderson K.E."/>
            <person name="Spieth J."/>
            <person name="Clifton S.W."/>
            <person name="Latreille P."/>
            <person name="Courtney L."/>
            <person name="Porwollik S."/>
            <person name="Ali J."/>
            <person name="Dante M."/>
            <person name="Du F."/>
            <person name="Hou S."/>
            <person name="Layman D."/>
            <person name="Leonard S."/>
            <person name="Nguyen C."/>
            <person name="Scott K."/>
            <person name="Holmes A."/>
            <person name="Grewal N."/>
            <person name="Mulvaney E."/>
            <person name="Ryan E."/>
            <person name="Sun H."/>
            <person name="Florea L."/>
            <person name="Miller W."/>
            <person name="Stoneking T."/>
            <person name="Nhan M."/>
            <person name="Waterston R."/>
            <person name="Wilson R.K."/>
        </authorList>
    </citation>
    <scope>NUCLEOTIDE SEQUENCE [LARGE SCALE GENOMIC DNA]</scope>
    <source>
        <strain>LT2 / SGSC1412 / ATCC 700720</strain>
    </source>
</reference>
<sequence length="723" mass="81911">MSAISLIQPDRDLFSWPQYWAACFGPAPFLPMSRDEMDQLGWDSCDIILVTGDAYVDHPSFGMAICGRMLEAQGFRVGIIAQPDWNSKDDFMRLGKPNLFFGVTAGNMDSMINRYTADRKLRHDDAYTPDNVAGKRPDRATLVYTQRCKEAWKDVPVILGGIEASLRRTAHYDYWSDTVRRSVLVDSKADMLMFGNGERPLVEVAHRLAMGETIDQIRDVRNTAIMVKEALPGWSGVDSTRLDTPGKIDPIPHPYGEDLPCADNKPVAPKKQEAKAITVQPPRPKPWEKTYILLPSFEKVKGDKVLYAHASRILHHETNPGCARALMQKHGDRYVWINPPAIPLSTEEMDSVFALPYQRVPHPAYGNARIPAYEMIRFSINIMRGCFGGCSFCSITEHEGRIIQSRSEDSIINEIEAIRDTVPGFTGVISDLGGPTANMYMLRCKSPRAEQTCRRLSCVYPDICPHMDTDHTPTINLYRRARELKGIKKILIASGVRYDIAVEDPRYIKELASHHVGGYLKIAPEHTEEGPLSKMMKPGMGSYDRFKELFDLYSKQAGKEQYLIPYFISAHPGTRDEDMVNLALWLKRHRFRLDQVQNFYPSPLANSTTMYYTGKNPLGKIGYKSEDVVVPKGDRQRRLHKALLRYHDPANWPLIRQALEAMGKKHLIGGRRECLVPAPTIEEMREARRQNRNTRPALTKHTPVEHQRQGLAANKKRGKGAGR</sequence>
<feature type="chain" id="PRO_0000076394" description="UPF0313 protein YgiQ">
    <location>
        <begin position="1"/>
        <end position="723"/>
    </location>
</feature>
<feature type="domain" description="Radical SAM core" evidence="2">
    <location>
        <begin position="372"/>
        <end position="650"/>
    </location>
</feature>
<feature type="region of interest" description="Disordered" evidence="3">
    <location>
        <begin position="686"/>
        <end position="723"/>
    </location>
</feature>
<feature type="compositionally biased region" description="Basic residues" evidence="3">
    <location>
        <begin position="714"/>
        <end position="723"/>
    </location>
</feature>
<feature type="binding site" evidence="1">
    <location>
        <position position="386"/>
    </location>
    <ligand>
        <name>[4Fe-4S] cluster</name>
        <dbReference type="ChEBI" id="CHEBI:49883"/>
        <note>4Fe-4S-S-AdoMet</note>
    </ligand>
</feature>
<feature type="binding site" evidence="1">
    <location>
        <position position="390"/>
    </location>
    <ligand>
        <name>[4Fe-4S] cluster</name>
        <dbReference type="ChEBI" id="CHEBI:49883"/>
        <note>4Fe-4S-S-AdoMet</note>
    </ligand>
</feature>
<feature type="binding site" evidence="1">
    <location>
        <position position="393"/>
    </location>
    <ligand>
        <name>[4Fe-4S] cluster</name>
        <dbReference type="ChEBI" id="CHEBI:49883"/>
        <note>4Fe-4S-S-AdoMet</note>
    </ligand>
</feature>
<gene>
    <name evidence="1" type="primary">ygiQ</name>
    <name type="ordered locus">STM3168</name>
</gene>
<name>YGIQ_SALTY</name>
<organism>
    <name type="scientific">Salmonella typhimurium (strain LT2 / SGSC1412 / ATCC 700720)</name>
    <dbReference type="NCBI Taxonomy" id="99287"/>
    <lineage>
        <taxon>Bacteria</taxon>
        <taxon>Pseudomonadati</taxon>
        <taxon>Pseudomonadota</taxon>
        <taxon>Gammaproteobacteria</taxon>
        <taxon>Enterobacterales</taxon>
        <taxon>Enterobacteriaceae</taxon>
        <taxon>Salmonella</taxon>
    </lineage>
</organism>
<protein>
    <recommendedName>
        <fullName evidence="1">UPF0313 protein YgiQ</fullName>
    </recommendedName>
</protein>
<comment type="cofactor">
    <cofactor evidence="1">
        <name>[4Fe-4S] cluster</name>
        <dbReference type="ChEBI" id="CHEBI:49883"/>
    </cofactor>
    <text evidence="1">Binds 1 [4Fe-4S] cluster. The cluster is coordinated with 3 cysteines and an exchangeable S-adenosyl-L-methionine.</text>
</comment>
<comment type="similarity">
    <text evidence="1">Belongs to the UPF0313 family.</text>
</comment>
<dbReference type="EMBL" id="AE006468">
    <property type="protein sequence ID" value="AAL22042.1"/>
    <property type="molecule type" value="Genomic_DNA"/>
</dbReference>
<dbReference type="RefSeq" id="WP_001274458.1">
    <property type="nucleotide sequence ID" value="NC_003197.2"/>
</dbReference>
<dbReference type="STRING" id="99287.STM3168"/>
<dbReference type="PaxDb" id="99287-STM3168"/>
<dbReference type="KEGG" id="stm:STM3168"/>
<dbReference type="PATRIC" id="fig|99287.12.peg.3359"/>
<dbReference type="HOGENOM" id="CLU_018288_2_0_6"/>
<dbReference type="OMA" id="DSMVNRY"/>
<dbReference type="PhylomeDB" id="Q8ZM03"/>
<dbReference type="BioCyc" id="SENT99287:STM3168-MONOMER"/>
<dbReference type="Proteomes" id="UP000001014">
    <property type="component" value="Chromosome"/>
</dbReference>
<dbReference type="GO" id="GO:0051539">
    <property type="term" value="F:4 iron, 4 sulfur cluster binding"/>
    <property type="evidence" value="ECO:0007669"/>
    <property type="project" value="UniProtKB-KW"/>
</dbReference>
<dbReference type="GO" id="GO:0003824">
    <property type="term" value="F:catalytic activity"/>
    <property type="evidence" value="ECO:0007669"/>
    <property type="project" value="InterPro"/>
</dbReference>
<dbReference type="GO" id="GO:0005506">
    <property type="term" value="F:iron ion binding"/>
    <property type="evidence" value="ECO:0007669"/>
    <property type="project" value="UniProtKB-UniRule"/>
</dbReference>
<dbReference type="Gene3D" id="3.80.30.20">
    <property type="entry name" value="tm_1862 like domain"/>
    <property type="match status" value="1"/>
</dbReference>
<dbReference type="HAMAP" id="MF_01251">
    <property type="entry name" value="UPF0313"/>
    <property type="match status" value="1"/>
</dbReference>
<dbReference type="InterPro" id="IPR006638">
    <property type="entry name" value="Elp3/MiaA/NifB-like_rSAM"/>
</dbReference>
<dbReference type="InterPro" id="IPR020612">
    <property type="entry name" value="Methylthiotransferase_CS"/>
</dbReference>
<dbReference type="InterPro" id="IPR007197">
    <property type="entry name" value="rSAM"/>
</dbReference>
<dbReference type="InterPro" id="IPR023404">
    <property type="entry name" value="rSAM_horseshoe"/>
</dbReference>
<dbReference type="InterPro" id="IPR022946">
    <property type="entry name" value="UPF0313"/>
</dbReference>
<dbReference type="InterPro" id="IPR024560">
    <property type="entry name" value="UPF0313_C"/>
</dbReference>
<dbReference type="InterPro" id="IPR013704">
    <property type="entry name" value="UPF0313_N"/>
</dbReference>
<dbReference type="NCBIfam" id="TIGR03904">
    <property type="entry name" value="SAM_YgiQ"/>
    <property type="match status" value="1"/>
</dbReference>
<dbReference type="PANTHER" id="PTHR32331">
    <property type="entry name" value="UPF0313 PROTEIN YGIQ"/>
    <property type="match status" value="1"/>
</dbReference>
<dbReference type="PANTHER" id="PTHR32331:SF0">
    <property type="entry name" value="UPF0313 PROTEIN YGIQ"/>
    <property type="match status" value="1"/>
</dbReference>
<dbReference type="Pfam" id="PF11842">
    <property type="entry name" value="DUF3362"/>
    <property type="match status" value="1"/>
</dbReference>
<dbReference type="Pfam" id="PF04055">
    <property type="entry name" value="Radical_SAM"/>
    <property type="match status" value="1"/>
</dbReference>
<dbReference type="Pfam" id="PF08497">
    <property type="entry name" value="Radical_SAM_N"/>
    <property type="match status" value="1"/>
</dbReference>
<dbReference type="SFLD" id="SFLDG01082">
    <property type="entry name" value="B12-binding_domain_containing"/>
    <property type="match status" value="1"/>
</dbReference>
<dbReference type="SFLD" id="SFLDS00029">
    <property type="entry name" value="Radical_SAM"/>
    <property type="match status" value="1"/>
</dbReference>
<dbReference type="SFLD" id="SFLDG01069">
    <property type="entry name" value="UPF0313"/>
    <property type="match status" value="1"/>
</dbReference>
<dbReference type="SMART" id="SM00729">
    <property type="entry name" value="Elp3"/>
    <property type="match status" value="1"/>
</dbReference>
<dbReference type="SUPFAM" id="SSF102114">
    <property type="entry name" value="Radical SAM enzymes"/>
    <property type="match status" value="1"/>
</dbReference>
<dbReference type="PROSITE" id="PS51918">
    <property type="entry name" value="RADICAL_SAM"/>
    <property type="match status" value="1"/>
</dbReference>